<protein>
    <recommendedName>
        <fullName>Periplasmic [NiFe] hydrogenase small subunit 1</fullName>
        <ecNumber>1.12.2.1</ecNumber>
    </recommendedName>
    <alternativeName>
        <fullName>NiFe hydrogenlyase small chain 1</fullName>
    </alternativeName>
</protein>
<proteinExistence type="evidence at protein level"/>
<keyword id="KW-0003">3Fe-4S</keyword>
<keyword id="KW-0004">4Fe-4S</keyword>
<keyword id="KW-0408">Iron</keyword>
<keyword id="KW-0411">Iron-sulfur</keyword>
<keyword id="KW-0479">Metal-binding</keyword>
<keyword id="KW-0560">Oxidoreductase</keyword>
<keyword id="KW-0574">Periplasm</keyword>
<keyword id="KW-1185">Reference proteome</keyword>
<keyword id="KW-0732">Signal</keyword>
<organism>
    <name type="scientific">Nitratidesulfovibrio vulgaris (strain ATCC 29579 / DSM 644 / CCUG 34227 / NCIMB 8303 / VKM B-1760 / Hildenborough)</name>
    <name type="common">Desulfovibrio vulgaris</name>
    <dbReference type="NCBI Taxonomy" id="882"/>
    <lineage>
        <taxon>Bacteria</taxon>
        <taxon>Pseudomonadati</taxon>
        <taxon>Thermodesulfobacteriota</taxon>
        <taxon>Desulfovibrionia</taxon>
        <taxon>Desulfovibrionales</taxon>
        <taxon>Desulfovibrionaceae</taxon>
        <taxon>Nitratidesulfovibrio</taxon>
    </lineage>
</organism>
<gene>
    <name type="primary">hynB1</name>
    <name type="synonym">hynB-1</name>
    <name type="ordered locus">DVU_1921</name>
</gene>
<sequence>MRFSVGLGKEGAEERLARRGVSRRDFLKFCTAIAVTMGMGPAFAPEVARALTGSRRPSVVYLHNAECTGCSESVLRAFQPYLDELILDTISLDYHETIMAAAGDAAEAALHQAVANPDGFICIVEGAIPTADNGIYGKVANHTMLSICSDIVPKAKAVIAYGTCATFGGVQAAKPNPTGAKGLNDALKHLGVNAINLAGCPPNPYNLVGTLVYYLKNNAAPEMDEFNRPLMFFGQSVHDNCPRLKHFDAGEFAPSFESEEARKGWCLYELGCKGPSTMNNCPKIKFNQTNWPVEAGHPCIGCSEPDFWDEKSPFYES</sequence>
<comment type="catalytic activity">
    <reaction>
        <text>2 Fe(III)-[cytochrome c3] + H2 = 2 Fe(II)-[cytochrome c3] + 2 H(+)</text>
        <dbReference type="Rhea" id="RHEA:20625"/>
        <dbReference type="Rhea" id="RHEA-COMP:11576"/>
        <dbReference type="Rhea" id="RHEA-COMP:11577"/>
        <dbReference type="ChEBI" id="CHEBI:15378"/>
        <dbReference type="ChEBI" id="CHEBI:18276"/>
        <dbReference type="ChEBI" id="CHEBI:29033"/>
        <dbReference type="ChEBI" id="CHEBI:29034"/>
        <dbReference type="EC" id="1.12.2.1"/>
    </reaction>
</comment>
<comment type="cofactor">
    <cofactor evidence="1">
        <name>[3Fe-4S] cluster</name>
        <dbReference type="ChEBI" id="CHEBI:21137"/>
    </cofactor>
    <text evidence="1">Binds 1 [3Fe-4S] cluster.</text>
</comment>
<comment type="cofactor">
    <cofactor evidence="1">
        <name>[4Fe-4S] cluster</name>
        <dbReference type="ChEBI" id="CHEBI:49883"/>
    </cofactor>
    <text evidence="1">Binds 2 [4Fe-4S] clusters.</text>
</comment>
<comment type="subunit">
    <text>Heterodimer of a large and a small subunit.</text>
</comment>
<comment type="subcellular location">
    <subcellularLocation>
        <location>Periplasm</location>
    </subcellularLocation>
</comment>
<comment type="PTM">
    <text>Predicted to be exported by the Tat system. The position of the signal peptide cleavage has not been experimentally proven.</text>
</comment>
<comment type="similarity">
    <text evidence="4">Belongs to the [NiFe]/[NiFeSe] hydrogenase small subunit family.</text>
</comment>
<evidence type="ECO:0000250" key="1"/>
<evidence type="ECO:0000255" key="2">
    <source>
        <dbReference type="PROSITE-ProRule" id="PRU00648"/>
    </source>
</evidence>
<evidence type="ECO:0000269" key="3">
    <source>
    </source>
</evidence>
<evidence type="ECO:0000305" key="4"/>
<reference key="1">
    <citation type="journal article" date="2004" name="Nat. Biotechnol.">
        <title>The genome sequence of the anaerobic, sulfate-reducing bacterium Desulfovibrio vulgaris Hildenborough.</title>
        <authorList>
            <person name="Heidelberg J.F."/>
            <person name="Seshadri R."/>
            <person name="Haveman S.A."/>
            <person name="Hemme C.L."/>
            <person name="Paulsen I.T."/>
            <person name="Kolonay J.F."/>
            <person name="Eisen J.A."/>
            <person name="Ward N.L."/>
            <person name="Methe B.A."/>
            <person name="Brinkac L.M."/>
            <person name="Daugherty S.C."/>
            <person name="DeBoy R.T."/>
            <person name="Dodson R.J."/>
            <person name="Durkin A.S."/>
            <person name="Madupu R."/>
            <person name="Nelson W.C."/>
            <person name="Sullivan S.A."/>
            <person name="Fouts D.E."/>
            <person name="Haft D.H."/>
            <person name="Selengut J."/>
            <person name="Peterson J.D."/>
            <person name="Davidsen T.M."/>
            <person name="Zafar N."/>
            <person name="Zhou L."/>
            <person name="Radune D."/>
            <person name="Dimitrov G."/>
            <person name="Hance M."/>
            <person name="Tran K."/>
            <person name="Khouri H.M."/>
            <person name="Gill J."/>
            <person name="Utterback T.R."/>
            <person name="Feldblyum T.V."/>
            <person name="Wall J.D."/>
            <person name="Voordouw G."/>
            <person name="Fraser C.M."/>
        </authorList>
    </citation>
    <scope>NUCLEOTIDE SEQUENCE [LARGE SCALE GENOMIC DNA]</scope>
    <source>
        <strain>ATCC 29579 / DSM 644 / CCUG 34227 / NCIMB 8303 / VKM B-1760 / Hildenborough</strain>
    </source>
</reference>
<reference key="2">
    <citation type="journal article" date="1992" name="J. Gen. Microbiol.">
        <title>Site-directed mutagenesis of the hydrogenase signal peptide consensus box prevents export of a beta-lactamase fusion protein.</title>
        <authorList>
            <person name="Niviere V."/>
            <person name="Wong S.L."/>
            <person name="Voordouw G."/>
        </authorList>
    </citation>
    <scope>NUCLEOTIDE SEQUENCE [GENOMIC DNA] OF 1-55</scope>
    <scope>MUTAGENESIS OF ARG-18</scope>
</reference>
<name>PHNS1_NITV2</name>
<dbReference type="EC" id="1.12.2.1"/>
<dbReference type="EMBL" id="AE017285">
    <property type="protein sequence ID" value="AAS96397.1"/>
    <property type="molecule type" value="Genomic_DNA"/>
</dbReference>
<dbReference type="RefSeq" id="WP_010939207.1">
    <property type="nucleotide sequence ID" value="NC_002937.3"/>
</dbReference>
<dbReference type="RefSeq" id="YP_011138.1">
    <property type="nucleotide sequence ID" value="NC_002937.3"/>
</dbReference>
<dbReference type="SMR" id="Q06173"/>
<dbReference type="IntAct" id="Q06173">
    <property type="interactions" value="1"/>
</dbReference>
<dbReference type="STRING" id="882.DVU_1921"/>
<dbReference type="PaxDb" id="882-DVU_1921"/>
<dbReference type="EnsemblBacteria" id="AAS96397">
    <property type="protein sequence ID" value="AAS96397"/>
    <property type="gene ID" value="DVU_1921"/>
</dbReference>
<dbReference type="KEGG" id="dvu:DVU_1921"/>
<dbReference type="PATRIC" id="fig|882.5.peg.1764"/>
<dbReference type="eggNOG" id="COG1740">
    <property type="taxonomic scope" value="Bacteria"/>
</dbReference>
<dbReference type="HOGENOM" id="CLU_046107_0_0_7"/>
<dbReference type="OrthoDB" id="9766729at2"/>
<dbReference type="PhylomeDB" id="Q06173"/>
<dbReference type="BioCyc" id="MetaCyc:MONOMER-22148"/>
<dbReference type="BRENDA" id="1.12.2.1">
    <property type="organism ID" value="1915"/>
</dbReference>
<dbReference type="Proteomes" id="UP000002194">
    <property type="component" value="Chromosome"/>
</dbReference>
<dbReference type="GO" id="GO:0044569">
    <property type="term" value="C:[Ni-Fe] hydrogenase complex"/>
    <property type="evidence" value="ECO:0007669"/>
    <property type="project" value="TreeGrafter"/>
</dbReference>
<dbReference type="GO" id="GO:0009375">
    <property type="term" value="C:ferredoxin hydrogenase complex"/>
    <property type="evidence" value="ECO:0007669"/>
    <property type="project" value="InterPro"/>
</dbReference>
<dbReference type="GO" id="GO:0016020">
    <property type="term" value="C:membrane"/>
    <property type="evidence" value="ECO:0007669"/>
    <property type="project" value="TreeGrafter"/>
</dbReference>
<dbReference type="GO" id="GO:0042597">
    <property type="term" value="C:periplasmic space"/>
    <property type="evidence" value="ECO:0007669"/>
    <property type="project" value="UniProtKB-SubCell"/>
</dbReference>
<dbReference type="GO" id="GO:0051538">
    <property type="term" value="F:3 iron, 4 sulfur cluster binding"/>
    <property type="evidence" value="ECO:0007669"/>
    <property type="project" value="UniProtKB-KW"/>
</dbReference>
<dbReference type="GO" id="GO:0051539">
    <property type="term" value="F:4 iron, 4 sulfur cluster binding"/>
    <property type="evidence" value="ECO:0007669"/>
    <property type="project" value="UniProtKB-KW"/>
</dbReference>
<dbReference type="GO" id="GO:0047806">
    <property type="term" value="F:cytochrome-c3 hydrogenase activity"/>
    <property type="evidence" value="ECO:0007669"/>
    <property type="project" value="UniProtKB-EC"/>
</dbReference>
<dbReference type="GO" id="GO:0009055">
    <property type="term" value="F:electron transfer activity"/>
    <property type="evidence" value="ECO:0007669"/>
    <property type="project" value="TreeGrafter"/>
</dbReference>
<dbReference type="GO" id="GO:0008901">
    <property type="term" value="F:ferredoxin hydrogenase activity"/>
    <property type="evidence" value="ECO:0007669"/>
    <property type="project" value="InterPro"/>
</dbReference>
<dbReference type="GO" id="GO:0046872">
    <property type="term" value="F:metal ion binding"/>
    <property type="evidence" value="ECO:0007669"/>
    <property type="project" value="UniProtKB-KW"/>
</dbReference>
<dbReference type="GO" id="GO:0009061">
    <property type="term" value="P:anaerobic respiration"/>
    <property type="evidence" value="ECO:0007669"/>
    <property type="project" value="TreeGrafter"/>
</dbReference>
<dbReference type="Gene3D" id="4.10.480.10">
    <property type="entry name" value="Cytochrome-c3 hydrogenase, C-terminal domain"/>
    <property type="match status" value="1"/>
</dbReference>
<dbReference type="Gene3D" id="3.40.50.700">
    <property type="entry name" value="NADH:ubiquinone oxidoreductase-like, 20kDa subunit"/>
    <property type="match status" value="1"/>
</dbReference>
<dbReference type="InterPro" id="IPR027394">
    <property type="entry name" value="Cytochrome-c3_hydrogenase_C"/>
</dbReference>
<dbReference type="InterPro" id="IPR006137">
    <property type="entry name" value="NADH_UbQ_OxRdtase-like_20kDa"/>
</dbReference>
<dbReference type="InterPro" id="IPR037148">
    <property type="entry name" value="NiFe-Hase_small_C_sf"/>
</dbReference>
<dbReference type="InterPro" id="IPR037024">
    <property type="entry name" value="NiFe_Hase_small_N_sf"/>
</dbReference>
<dbReference type="InterPro" id="IPR001821">
    <property type="entry name" value="NiFe_hydrogenase_ssu"/>
</dbReference>
<dbReference type="InterPro" id="IPR006311">
    <property type="entry name" value="TAT_signal"/>
</dbReference>
<dbReference type="InterPro" id="IPR019546">
    <property type="entry name" value="TAT_signal_bac_arc"/>
</dbReference>
<dbReference type="NCBIfam" id="TIGR00391">
    <property type="entry name" value="hydA"/>
    <property type="match status" value="1"/>
</dbReference>
<dbReference type="NCBIfam" id="TIGR01409">
    <property type="entry name" value="TAT_signal_seq"/>
    <property type="match status" value="1"/>
</dbReference>
<dbReference type="PANTHER" id="PTHR30013:SF7">
    <property type="entry name" value="HYDROGENASE-2 SMALL CHAIN"/>
    <property type="match status" value="1"/>
</dbReference>
<dbReference type="PANTHER" id="PTHR30013">
    <property type="entry name" value="NIFE / NIFESE HYDROGENASE SMALL SUBUNIT FAMILY MEMBER"/>
    <property type="match status" value="1"/>
</dbReference>
<dbReference type="Pfam" id="PF14720">
    <property type="entry name" value="NiFe_hyd_SSU_C"/>
    <property type="match status" value="1"/>
</dbReference>
<dbReference type="Pfam" id="PF01058">
    <property type="entry name" value="Oxidored_q6"/>
    <property type="match status" value="1"/>
</dbReference>
<dbReference type="PIRSF" id="PIRSF000310">
    <property type="entry name" value="NiFe_hyd_ssu"/>
    <property type="match status" value="1"/>
</dbReference>
<dbReference type="PRINTS" id="PR00614">
    <property type="entry name" value="NIHGNASESMLL"/>
</dbReference>
<dbReference type="SUPFAM" id="SSF56770">
    <property type="entry name" value="HydA/Nqo6-like"/>
    <property type="match status" value="1"/>
</dbReference>
<dbReference type="PROSITE" id="PS51318">
    <property type="entry name" value="TAT"/>
    <property type="match status" value="1"/>
</dbReference>
<feature type="signal peptide" description="Tat-type signal" evidence="2">
    <location>
        <begin position="1"/>
        <end position="49"/>
    </location>
</feature>
<feature type="chain" id="PRO_0000013417" description="Periplasmic [NiFe] hydrogenase small subunit 1">
    <location>
        <begin position="50"/>
        <end position="317"/>
    </location>
</feature>
<feature type="binding site" evidence="1">
    <location>
        <position position="67"/>
    </location>
    <ligand>
        <name>[4Fe-4S] cluster</name>
        <dbReference type="ChEBI" id="CHEBI:49883"/>
        <label>1</label>
    </ligand>
</feature>
<feature type="binding site" evidence="1">
    <location>
        <position position="70"/>
    </location>
    <ligand>
        <name>[4Fe-4S] cluster</name>
        <dbReference type="ChEBI" id="CHEBI:49883"/>
        <label>1</label>
    </ligand>
</feature>
<feature type="binding site" evidence="1">
    <location>
        <position position="164"/>
    </location>
    <ligand>
        <name>[4Fe-4S] cluster</name>
        <dbReference type="ChEBI" id="CHEBI:49883"/>
        <label>1</label>
    </ligand>
</feature>
<feature type="binding site" evidence="1">
    <location>
        <position position="200"/>
    </location>
    <ligand>
        <name>[4Fe-4S] cluster</name>
        <dbReference type="ChEBI" id="CHEBI:49883"/>
        <label>1</label>
    </ligand>
</feature>
<feature type="binding site" evidence="1">
    <location>
        <position position="238"/>
    </location>
    <ligand>
        <name>[4Fe-4S] cluster</name>
        <dbReference type="ChEBI" id="CHEBI:49883"/>
        <label>2</label>
    </ligand>
</feature>
<feature type="binding site" evidence="1">
    <location>
        <position position="241"/>
    </location>
    <ligand>
        <name>[4Fe-4S] cluster</name>
        <dbReference type="ChEBI" id="CHEBI:49883"/>
        <label>2</label>
    </ligand>
</feature>
<feature type="binding site" evidence="1">
    <location>
        <position position="266"/>
    </location>
    <ligand>
        <name>[4Fe-4S] cluster</name>
        <dbReference type="ChEBI" id="CHEBI:49883"/>
        <label>2</label>
    </ligand>
</feature>
<feature type="binding site" evidence="1">
    <location>
        <position position="272"/>
    </location>
    <ligand>
        <name>[4Fe-4S] cluster</name>
        <dbReference type="ChEBI" id="CHEBI:49883"/>
        <label>2</label>
    </ligand>
</feature>
<feature type="binding site" evidence="1">
    <location>
        <position position="281"/>
    </location>
    <ligand>
        <name>[3Fe-4S] cluster</name>
        <dbReference type="ChEBI" id="CHEBI:21137"/>
    </ligand>
</feature>
<feature type="binding site" evidence="1">
    <location>
        <position position="299"/>
    </location>
    <ligand>
        <name>[3Fe-4S] cluster</name>
        <dbReference type="ChEBI" id="CHEBI:21137"/>
    </ligand>
</feature>
<feature type="binding site" evidence="1">
    <location>
        <position position="302"/>
    </location>
    <ligand>
        <name>[3Fe-4S] cluster</name>
        <dbReference type="ChEBI" id="CHEBI:21137"/>
    </ligand>
</feature>
<feature type="mutagenesis site" description="Completely inhibits export and processing of the fusion protein." evidence="3">
    <original>R</original>
    <variation>E</variation>
    <location>
        <position position="18"/>
    </location>
</feature>
<accession>Q06173</accession>